<keyword id="KW-1003">Cell membrane</keyword>
<keyword id="KW-1015">Disulfide bond</keyword>
<keyword id="KW-0325">Glycoprotein</keyword>
<keyword id="KW-0378">Hydrolase</keyword>
<keyword id="KW-0472">Membrane</keyword>
<keyword id="KW-0645">Protease</keyword>
<keyword id="KW-1185">Reference proteome</keyword>
<keyword id="KW-0720">Serine protease</keyword>
<keyword id="KW-0735">Signal-anchor</keyword>
<keyword id="KW-0812">Transmembrane</keyword>
<keyword id="KW-1133">Transmembrane helix</keyword>
<organism>
    <name type="scientific">Rattus norvegicus</name>
    <name type="common">Rat</name>
    <dbReference type="NCBI Taxonomy" id="10116"/>
    <lineage>
        <taxon>Eukaryota</taxon>
        <taxon>Metazoa</taxon>
        <taxon>Chordata</taxon>
        <taxon>Craniata</taxon>
        <taxon>Vertebrata</taxon>
        <taxon>Euteleostomi</taxon>
        <taxon>Mammalia</taxon>
        <taxon>Eutheria</taxon>
        <taxon>Euarchontoglires</taxon>
        <taxon>Glires</taxon>
        <taxon>Rodentia</taxon>
        <taxon>Myomorpha</taxon>
        <taxon>Muroidea</taxon>
        <taxon>Muridae</taxon>
        <taxon>Murinae</taxon>
        <taxon>Rattus</taxon>
    </lineage>
</organism>
<proteinExistence type="evidence at transcript level"/>
<sequence>MTVSKLRPVIASRKSFPPWMIILGVLGVLAILGLIIGLLVHFLAVENKIYYYQGSFKVLNIPYDRNYERETSLESNYLSKILEIKMVDAFESSNIYKQYINSQIITLVPENNSVTAHIWLVFKDPWSNKENLRRRIESILHQMLENNSGSLTTDPGSLKLTEITKVDAEKIINNRCGRRPRMSATYDRITGGSTAQKGEWPWQASLRVNGKHHCGASLIGERFLLTAAHCFLRTNNPKNLTVSFGTRVTPAYMQHYVEEVIIHEDYVKGQHHDDVAIIKLTEKVSFRNDVHRVCLPEATQVFPPGEGVVVTGWGSLSYNGKSPLLLQKASIKIIDTNACNSEEAYGGRIMDTMLCAGYMEGYVDACQGDSGGPLVHPNSRDIWYLVGIVSWGHECGRVNKPGVYMRVTSYRDWIASKTGI</sequence>
<comment type="function">
    <text evidence="2">Serine protease.</text>
</comment>
<comment type="activity regulation">
    <text evidence="2">Inhibited by aprotinin, leupeptin, benzamidine, SERPINA1, SPINT1 and SPINT2.</text>
</comment>
<comment type="subcellular location">
    <subcellularLocation>
        <location evidence="6">Membrane</location>
        <topology evidence="6">Single-pass type II membrane protein</topology>
    </subcellularLocation>
    <subcellularLocation>
        <location evidence="2">Cell membrane</location>
    </subcellularLocation>
</comment>
<comment type="similarity">
    <text evidence="5">Belongs to the peptidase S1 family.</text>
</comment>
<reference key="1">
    <citation type="journal article" date="2004" name="Nature">
        <title>Genome sequence of the Brown Norway rat yields insights into mammalian evolution.</title>
        <authorList>
            <person name="Gibbs R.A."/>
            <person name="Weinstock G.M."/>
            <person name="Metzker M.L."/>
            <person name="Muzny D.M."/>
            <person name="Sodergren E.J."/>
            <person name="Scherer S."/>
            <person name="Scott G."/>
            <person name="Steffen D."/>
            <person name="Worley K.C."/>
            <person name="Burch P.E."/>
            <person name="Okwuonu G."/>
            <person name="Hines S."/>
            <person name="Lewis L."/>
            <person name="Deramo C."/>
            <person name="Delgado O."/>
            <person name="Dugan-Rocha S."/>
            <person name="Miner G."/>
            <person name="Morgan M."/>
            <person name="Hawes A."/>
            <person name="Gill R."/>
            <person name="Holt R.A."/>
            <person name="Adams M.D."/>
            <person name="Amanatides P.G."/>
            <person name="Baden-Tillson H."/>
            <person name="Barnstead M."/>
            <person name="Chin S."/>
            <person name="Evans C.A."/>
            <person name="Ferriera S."/>
            <person name="Fosler C."/>
            <person name="Glodek A."/>
            <person name="Gu Z."/>
            <person name="Jennings D."/>
            <person name="Kraft C.L."/>
            <person name="Nguyen T."/>
            <person name="Pfannkoch C.M."/>
            <person name="Sitter C."/>
            <person name="Sutton G.G."/>
            <person name="Venter J.C."/>
            <person name="Woodage T."/>
            <person name="Smith D."/>
            <person name="Lee H.-M."/>
            <person name="Gustafson E."/>
            <person name="Cahill P."/>
            <person name="Kana A."/>
            <person name="Doucette-Stamm L."/>
            <person name="Weinstock K."/>
            <person name="Fechtel K."/>
            <person name="Weiss R.B."/>
            <person name="Dunn D.M."/>
            <person name="Green E.D."/>
            <person name="Blakesley R.W."/>
            <person name="Bouffard G.G."/>
            <person name="De Jong P.J."/>
            <person name="Osoegawa K."/>
            <person name="Zhu B."/>
            <person name="Marra M."/>
            <person name="Schein J."/>
            <person name="Bosdet I."/>
            <person name="Fjell C."/>
            <person name="Jones S."/>
            <person name="Krzywinski M."/>
            <person name="Mathewson C."/>
            <person name="Siddiqui A."/>
            <person name="Wye N."/>
            <person name="McPherson J."/>
            <person name="Zhao S."/>
            <person name="Fraser C.M."/>
            <person name="Shetty J."/>
            <person name="Shatsman S."/>
            <person name="Geer K."/>
            <person name="Chen Y."/>
            <person name="Abramzon S."/>
            <person name="Nierman W.C."/>
            <person name="Havlak P.H."/>
            <person name="Chen R."/>
            <person name="Durbin K.J."/>
            <person name="Egan A."/>
            <person name="Ren Y."/>
            <person name="Song X.-Z."/>
            <person name="Li B."/>
            <person name="Liu Y."/>
            <person name="Qin X."/>
            <person name="Cawley S."/>
            <person name="Cooney A.J."/>
            <person name="D'Souza L.M."/>
            <person name="Martin K."/>
            <person name="Wu J.Q."/>
            <person name="Gonzalez-Garay M.L."/>
            <person name="Jackson A.R."/>
            <person name="Kalafus K.J."/>
            <person name="McLeod M.P."/>
            <person name="Milosavljevic A."/>
            <person name="Virk D."/>
            <person name="Volkov A."/>
            <person name="Wheeler D.A."/>
            <person name="Zhang Z."/>
            <person name="Bailey J.A."/>
            <person name="Eichler E.E."/>
            <person name="Tuzun E."/>
            <person name="Birney E."/>
            <person name="Mongin E."/>
            <person name="Ureta-Vidal A."/>
            <person name="Woodwark C."/>
            <person name="Zdobnov E."/>
            <person name="Bork P."/>
            <person name="Suyama M."/>
            <person name="Torrents D."/>
            <person name="Alexandersson M."/>
            <person name="Trask B.J."/>
            <person name="Young J.M."/>
            <person name="Huang H."/>
            <person name="Wang H."/>
            <person name="Xing H."/>
            <person name="Daniels S."/>
            <person name="Gietzen D."/>
            <person name="Schmidt J."/>
            <person name="Stevens K."/>
            <person name="Vitt U."/>
            <person name="Wingrove J."/>
            <person name="Camara F."/>
            <person name="Mar Alba M."/>
            <person name="Abril J.F."/>
            <person name="Guigo R."/>
            <person name="Smit A."/>
            <person name="Dubchak I."/>
            <person name="Rubin E.M."/>
            <person name="Couronne O."/>
            <person name="Poliakov A."/>
            <person name="Huebner N."/>
            <person name="Ganten D."/>
            <person name="Goesele C."/>
            <person name="Hummel O."/>
            <person name="Kreitler T."/>
            <person name="Lee Y.-A."/>
            <person name="Monti J."/>
            <person name="Schulz H."/>
            <person name="Zimdahl H."/>
            <person name="Himmelbauer H."/>
            <person name="Lehrach H."/>
            <person name="Jacob H.J."/>
            <person name="Bromberg S."/>
            <person name="Gullings-Handley J."/>
            <person name="Jensen-Seaman M.I."/>
            <person name="Kwitek A.E."/>
            <person name="Lazar J."/>
            <person name="Pasko D."/>
            <person name="Tonellato P.J."/>
            <person name="Twigger S."/>
            <person name="Ponting C.P."/>
            <person name="Duarte J.M."/>
            <person name="Rice S."/>
            <person name="Goodstadt L."/>
            <person name="Beatson S.A."/>
            <person name="Emes R.D."/>
            <person name="Winter E.E."/>
            <person name="Webber C."/>
            <person name="Brandt P."/>
            <person name="Nyakatura G."/>
            <person name="Adetobi M."/>
            <person name="Chiaromonte F."/>
            <person name="Elnitski L."/>
            <person name="Eswara P."/>
            <person name="Hardison R.C."/>
            <person name="Hou M."/>
            <person name="Kolbe D."/>
            <person name="Makova K."/>
            <person name="Miller W."/>
            <person name="Nekrutenko A."/>
            <person name="Riemer C."/>
            <person name="Schwartz S."/>
            <person name="Taylor J."/>
            <person name="Yang S."/>
            <person name="Zhang Y."/>
            <person name="Lindpaintner K."/>
            <person name="Andrews T.D."/>
            <person name="Caccamo M."/>
            <person name="Clamp M."/>
            <person name="Clarke L."/>
            <person name="Curwen V."/>
            <person name="Durbin R.M."/>
            <person name="Eyras E."/>
            <person name="Searle S.M."/>
            <person name="Cooper G.M."/>
            <person name="Batzoglou S."/>
            <person name="Brudno M."/>
            <person name="Sidow A."/>
            <person name="Stone E.A."/>
            <person name="Payseur B.A."/>
            <person name="Bourque G."/>
            <person name="Lopez-Otin C."/>
            <person name="Puente X.S."/>
            <person name="Chakrabarti K."/>
            <person name="Chatterji S."/>
            <person name="Dewey C."/>
            <person name="Pachter L."/>
            <person name="Bray N."/>
            <person name="Yap V.B."/>
            <person name="Caspi A."/>
            <person name="Tesler G."/>
            <person name="Pevzner P.A."/>
            <person name="Haussler D."/>
            <person name="Roskin K.M."/>
            <person name="Baertsch R."/>
            <person name="Clawson H."/>
            <person name="Furey T.S."/>
            <person name="Hinrichs A.S."/>
            <person name="Karolchik D."/>
            <person name="Kent W.J."/>
            <person name="Rosenbloom K.R."/>
            <person name="Trumbower H."/>
            <person name="Weirauch M."/>
            <person name="Cooper D.N."/>
            <person name="Stenson P.D."/>
            <person name="Ma B."/>
            <person name="Brent M."/>
            <person name="Arumugam M."/>
            <person name="Shteynberg D."/>
            <person name="Copley R.R."/>
            <person name="Taylor M.S."/>
            <person name="Riethman H."/>
            <person name="Mudunuri U."/>
            <person name="Peterson J."/>
            <person name="Guyer M."/>
            <person name="Felsenfeld A."/>
            <person name="Old S."/>
            <person name="Mockrin S."/>
            <person name="Collins F.S."/>
        </authorList>
    </citation>
    <scope>NUCLEOTIDE SEQUENCE [LARGE SCALE GENOMIC DNA]</scope>
    <source>
        <strain>Brown Norway</strain>
    </source>
</reference>
<reference key="2">
    <citation type="journal article" date="2004" name="Genome Res.">
        <title>A genomic analysis of rat proteases and protease inhibitors.</title>
        <authorList>
            <person name="Puente X.S."/>
            <person name="Lopez-Otin C."/>
        </authorList>
    </citation>
    <scope>IDENTIFICATION</scope>
</reference>
<name>TM11L_RAT</name>
<protein>
    <recommendedName>
        <fullName>Transmembrane protease serine 11B-like protein</fullName>
        <ecNumber>3.4.21.-</ecNumber>
    </recommendedName>
    <alternativeName>
        <fullName>Airway trypsin-like protease 5</fullName>
    </alternativeName>
    <alternativeName>
        <fullName>Transmembrane protease serine 11B</fullName>
    </alternativeName>
</protein>
<gene>
    <name type="primary">Tmprss11bnl</name>
    <name type="synonym">Hatl5</name>
    <name type="synonym">Tmprss11b</name>
</gene>
<feature type="chain" id="PRO_0000299321" description="Transmembrane protease serine 11B-like protein">
    <location>
        <begin position="1"/>
        <end position="420"/>
    </location>
</feature>
<feature type="topological domain" description="Cytoplasmic" evidence="3">
    <location>
        <begin position="1"/>
        <end position="19"/>
    </location>
</feature>
<feature type="transmembrane region" description="Helical; Signal-anchor for type II membrane protein" evidence="3">
    <location>
        <begin position="20"/>
        <end position="40"/>
    </location>
</feature>
<feature type="topological domain" description="Extracellular" evidence="3">
    <location>
        <begin position="41"/>
        <end position="420"/>
    </location>
</feature>
<feature type="domain" description="SEA" evidence="4">
    <location>
        <begin position="48"/>
        <end position="165"/>
    </location>
</feature>
<feature type="domain" description="Peptidase S1" evidence="5">
    <location>
        <begin position="189"/>
        <end position="419"/>
    </location>
</feature>
<feature type="active site" description="Charge relay system" evidence="1">
    <location>
        <position position="229"/>
    </location>
</feature>
<feature type="active site" description="Charge relay system" evidence="1">
    <location>
        <position position="274"/>
    </location>
</feature>
<feature type="active site" description="Charge relay system" evidence="1">
    <location>
        <position position="370"/>
    </location>
</feature>
<feature type="glycosylation site" description="N-linked (GlcNAc...) asparagine" evidence="3">
    <location>
        <position position="111"/>
    </location>
</feature>
<feature type="glycosylation site" description="N-linked (GlcNAc...) asparagine" evidence="3">
    <location>
        <position position="146"/>
    </location>
</feature>
<feature type="glycosylation site" description="N-linked (GlcNAc...) asparagine" evidence="3">
    <location>
        <position position="239"/>
    </location>
</feature>
<feature type="disulfide bond" evidence="5">
    <location>
        <begin position="214"/>
        <end position="230"/>
    </location>
</feature>
<feature type="disulfide bond" evidence="5">
    <location>
        <begin position="339"/>
        <end position="355"/>
    </location>
</feature>
<feature type="disulfide bond" evidence="5">
    <location>
        <begin position="366"/>
        <end position="395"/>
    </location>
</feature>
<evidence type="ECO:0000250" key="1"/>
<evidence type="ECO:0000250" key="2">
    <source>
        <dbReference type="UniProtKB" id="Q86T26"/>
    </source>
</evidence>
<evidence type="ECO:0000255" key="3"/>
<evidence type="ECO:0000255" key="4">
    <source>
        <dbReference type="PROSITE-ProRule" id="PRU00188"/>
    </source>
</evidence>
<evidence type="ECO:0000255" key="5">
    <source>
        <dbReference type="PROSITE-ProRule" id="PRU00274"/>
    </source>
</evidence>
<evidence type="ECO:0000305" key="6"/>
<dbReference type="EC" id="3.4.21.-"/>
<dbReference type="EMBL" id="AABR03092659">
    <property type="status" value="NOT_ANNOTATED_CDS"/>
    <property type="molecule type" value="Genomic_DNA"/>
</dbReference>
<dbReference type="EMBL" id="AABR03092237">
    <property type="status" value="NOT_ANNOTATED_CDS"/>
    <property type="molecule type" value="Genomic_DNA"/>
</dbReference>
<dbReference type="EMBL" id="BN000379">
    <property type="protein sequence ID" value="CAE51905.1"/>
    <property type="molecule type" value="mRNA"/>
</dbReference>
<dbReference type="RefSeq" id="NP_001004020.1">
    <property type="nucleotide sequence ID" value="NM_001004020.1"/>
</dbReference>
<dbReference type="SMR" id="Q6IE14"/>
<dbReference type="FunCoup" id="Q6IE14">
    <property type="interactions" value="158"/>
</dbReference>
<dbReference type="STRING" id="10116.ENSRNOP00000002743"/>
<dbReference type="MEROPS" id="S01.321"/>
<dbReference type="GlyCosmos" id="Q6IE14">
    <property type="glycosylation" value="3 sites, No reported glycans"/>
</dbReference>
<dbReference type="GlyGen" id="Q6IE14">
    <property type="glycosylation" value="4 sites"/>
</dbReference>
<dbReference type="PhosphoSitePlus" id="Q6IE14"/>
<dbReference type="PaxDb" id="10116-ENSRNOP00000002743"/>
<dbReference type="UCSC" id="RGD:1303278">
    <property type="organism name" value="rat"/>
</dbReference>
<dbReference type="AGR" id="RGD:1303278"/>
<dbReference type="RGD" id="1303278">
    <property type="gene designation" value="Tmprss11bnl"/>
</dbReference>
<dbReference type="VEuPathDB" id="HostDB:ENSRNOG00000002002"/>
<dbReference type="eggNOG" id="KOG3627">
    <property type="taxonomic scope" value="Eukaryota"/>
</dbReference>
<dbReference type="HOGENOM" id="CLU_006842_19_0_1"/>
<dbReference type="InParanoid" id="Q6IE14"/>
<dbReference type="PhylomeDB" id="Q6IE14"/>
<dbReference type="TreeFam" id="TF351684"/>
<dbReference type="PRO" id="PR:Q6IE14"/>
<dbReference type="Proteomes" id="UP000002494">
    <property type="component" value="Chromosome 14"/>
</dbReference>
<dbReference type="Bgee" id="ENSRNOG00000002002">
    <property type="expression patterns" value="Expressed in esophagus and 1 other cell type or tissue"/>
</dbReference>
<dbReference type="GO" id="GO:0005576">
    <property type="term" value="C:extracellular region"/>
    <property type="evidence" value="ECO:0007669"/>
    <property type="project" value="InterPro"/>
</dbReference>
<dbReference type="GO" id="GO:0005886">
    <property type="term" value="C:plasma membrane"/>
    <property type="evidence" value="ECO:0000250"/>
    <property type="project" value="UniProtKB"/>
</dbReference>
<dbReference type="GO" id="GO:0004252">
    <property type="term" value="F:serine-type endopeptidase activity"/>
    <property type="evidence" value="ECO:0007669"/>
    <property type="project" value="InterPro"/>
</dbReference>
<dbReference type="GO" id="GO:0008236">
    <property type="term" value="F:serine-type peptidase activity"/>
    <property type="evidence" value="ECO:0000250"/>
    <property type="project" value="UniProtKB"/>
</dbReference>
<dbReference type="GO" id="GO:0006508">
    <property type="term" value="P:proteolysis"/>
    <property type="evidence" value="ECO:0007669"/>
    <property type="project" value="UniProtKB-KW"/>
</dbReference>
<dbReference type="CDD" id="cd00190">
    <property type="entry name" value="Tryp_SPc"/>
    <property type="match status" value="1"/>
</dbReference>
<dbReference type="FunFam" id="2.40.10.10:FF:000003">
    <property type="entry name" value="Transmembrane serine protease 3"/>
    <property type="match status" value="1"/>
</dbReference>
<dbReference type="Gene3D" id="3.30.70.960">
    <property type="entry name" value="SEA domain"/>
    <property type="match status" value="1"/>
</dbReference>
<dbReference type="Gene3D" id="2.40.10.10">
    <property type="entry name" value="Trypsin-like serine proteases"/>
    <property type="match status" value="2"/>
</dbReference>
<dbReference type="InterPro" id="IPR017329">
    <property type="entry name" value="Pept_S1A_HAT/DESC1"/>
</dbReference>
<dbReference type="InterPro" id="IPR009003">
    <property type="entry name" value="Peptidase_S1_PA"/>
</dbReference>
<dbReference type="InterPro" id="IPR043504">
    <property type="entry name" value="Peptidase_S1_PA_chymotrypsin"/>
</dbReference>
<dbReference type="InterPro" id="IPR001314">
    <property type="entry name" value="Peptidase_S1A"/>
</dbReference>
<dbReference type="InterPro" id="IPR000082">
    <property type="entry name" value="SEA_dom"/>
</dbReference>
<dbReference type="InterPro" id="IPR036364">
    <property type="entry name" value="SEA_dom_sf"/>
</dbReference>
<dbReference type="InterPro" id="IPR001254">
    <property type="entry name" value="Trypsin_dom"/>
</dbReference>
<dbReference type="InterPro" id="IPR018114">
    <property type="entry name" value="TRYPSIN_HIS"/>
</dbReference>
<dbReference type="InterPro" id="IPR033116">
    <property type="entry name" value="TRYPSIN_SER"/>
</dbReference>
<dbReference type="PANTHER" id="PTHR24252">
    <property type="entry name" value="ACROSIN-RELATED"/>
    <property type="match status" value="1"/>
</dbReference>
<dbReference type="PANTHER" id="PTHR24252:SF28">
    <property type="entry name" value="TRANSMEMBRANE PROTEASE SERINE 11C ISOFORM X1"/>
    <property type="match status" value="1"/>
</dbReference>
<dbReference type="Pfam" id="PF01390">
    <property type="entry name" value="SEA"/>
    <property type="match status" value="1"/>
</dbReference>
<dbReference type="Pfam" id="PF00089">
    <property type="entry name" value="Trypsin"/>
    <property type="match status" value="1"/>
</dbReference>
<dbReference type="PIRSF" id="PIRSF037941">
    <property type="entry name" value="TMPRSS11ABCDE"/>
    <property type="match status" value="1"/>
</dbReference>
<dbReference type="PRINTS" id="PR00722">
    <property type="entry name" value="CHYMOTRYPSIN"/>
</dbReference>
<dbReference type="SMART" id="SM00020">
    <property type="entry name" value="Tryp_SPc"/>
    <property type="match status" value="1"/>
</dbReference>
<dbReference type="SUPFAM" id="SSF82671">
    <property type="entry name" value="SEA domain"/>
    <property type="match status" value="1"/>
</dbReference>
<dbReference type="SUPFAM" id="SSF50494">
    <property type="entry name" value="Trypsin-like serine proteases"/>
    <property type="match status" value="1"/>
</dbReference>
<dbReference type="PROSITE" id="PS50024">
    <property type="entry name" value="SEA"/>
    <property type="match status" value="1"/>
</dbReference>
<dbReference type="PROSITE" id="PS50240">
    <property type="entry name" value="TRYPSIN_DOM"/>
    <property type="match status" value="1"/>
</dbReference>
<dbReference type="PROSITE" id="PS00134">
    <property type="entry name" value="TRYPSIN_HIS"/>
    <property type="match status" value="1"/>
</dbReference>
<dbReference type="PROSITE" id="PS00135">
    <property type="entry name" value="TRYPSIN_SER"/>
    <property type="match status" value="1"/>
</dbReference>
<accession>Q6IE14</accession>